<protein>
    <recommendedName>
        <fullName evidence="6">Ubiquitin conjugation factor E4 A</fullName>
        <ecNumber evidence="1">2.3.2.27</ecNumber>
    </recommendedName>
    <alternativeName>
        <fullName>RING-type E3 ubiquitin transferase E4 A</fullName>
    </alternativeName>
</protein>
<sequence>MTDQENNNNISSNPFAALFGSLADAKQFAAIQKEQLKQQSDELPASPDDSDNSVSESLDEFDYSVAEISRSFRSQQEICEQLNINHMIQRIFLITLDNSDPSLKSGNGIPSRCVYLEEMAVDLEDQDWLDMNNVEQAVFTRLLLQDPGNHLINMTSSTTLNLSADRDAGEKHIFCYLYSCFQRAKEEITKVPENLLPFAVQCRNLTVSNTRTVLLTPEIYVDQNIHEQLVDLMVEAILGGHFESVAEFLDEVIEALILDEEVRTFPEVMIPVFDILSSRIKDLELCQILLYAYLDILLYFTKQKDMAKVFVDYIQPKDPSNGQMYQKTLLGVILNISCLLKTPGVIENHGYFLNPSRSSPQEIKVQEANIHQFMARYHEKIYQMLKNLLQLSPETKHCILSWLGNCLHANAGRTKIWANQMPEIFFQMYASDAFFLNLGAALLKLCQPFCKPRSSRLLTFNPTYCALKELNDEERKIKNVHMRGLDKETCLIPAVQEPKFPQNYNLVTENLVLTEYTLYLGFHRLHDQMVKINQNLHRLQVAWRDAQQSSSPAADNLREQFERLMTVYLSTKTAMTEPQMLQNCLNLQVSMAVLLVQLAIGNEGSQLMELTFPLPDGYSSLAYVPEFFADNLGDFLIFLRRFADDILETSADSLEHVLHFITIFTGSIERMKNPHLRAKLAEVLEAVMPHMDQTPNPLVSSVFHRKRVFCNFPYASHLAEALIKVFVDIEFTGDPHQFEQKFNYRRPMYPILKYMWGTDTYRESIKDLADYASKNLEAMNPPLFLRFLNLLMNDAIFLLDEAIQYLSKIKIQQIEKDRGEWDNLTPEARREKEAGLQMFGQLARFHNIMSNETIGTLAFLTSEIKSLFVHPFLAERIISMLNYFLQHLVGPKMGALKVKDFSEFDFKPQQLVSDICTIYLNLGDEENFCATVPKDGRSYSPTLFAQTVRVLKKINKPGNMIVAFSNLAERIKSLADLQQQEEETYADACDEFLDPIMSTLMSDPVVLPSSRVTVDRSTIARHLLSDQTDPFNRSPLTMDQIRPNTELKEKIQRWLAERKQQQKEQLE</sequence>
<keyword id="KW-0007">Acetylation</keyword>
<keyword id="KW-0963">Cytoplasm</keyword>
<keyword id="KW-1185">Reference proteome</keyword>
<keyword id="KW-0808">Transferase</keyword>
<keyword id="KW-0833">Ubl conjugation pathway</keyword>
<dbReference type="EC" id="2.3.2.27" evidence="1"/>
<dbReference type="EMBL" id="BC142480">
    <property type="protein sequence ID" value="AAI42481.1"/>
    <property type="molecule type" value="mRNA"/>
</dbReference>
<dbReference type="RefSeq" id="NP_001092469.1">
    <property type="nucleotide sequence ID" value="NM_001098999.1"/>
</dbReference>
<dbReference type="SMR" id="A5PKG6"/>
<dbReference type="FunCoup" id="A5PKG6">
    <property type="interactions" value="3571"/>
</dbReference>
<dbReference type="STRING" id="9913.ENSBTAP00000065403"/>
<dbReference type="PaxDb" id="9913-ENSBTAP00000026289"/>
<dbReference type="GeneID" id="517544"/>
<dbReference type="KEGG" id="bta:517544"/>
<dbReference type="CTD" id="9354"/>
<dbReference type="VEuPathDB" id="HostDB:ENSBTAG00000019725"/>
<dbReference type="eggNOG" id="KOG2042">
    <property type="taxonomic scope" value="Eukaryota"/>
</dbReference>
<dbReference type="HOGENOM" id="CLU_003224_1_0_1"/>
<dbReference type="InParanoid" id="A5PKG6"/>
<dbReference type="OMA" id="WLTEIAM"/>
<dbReference type="OrthoDB" id="20295at2759"/>
<dbReference type="TreeFam" id="TF300802"/>
<dbReference type="Reactome" id="R-BTA-983168">
    <property type="pathway name" value="Antigen processing: Ubiquitination &amp; Proteasome degradation"/>
</dbReference>
<dbReference type="UniPathway" id="UPA00143"/>
<dbReference type="Proteomes" id="UP000009136">
    <property type="component" value="Chromosome 15"/>
</dbReference>
<dbReference type="Bgee" id="ENSBTAG00000019725">
    <property type="expression patterns" value="Expressed in neutrophil and 108 other cell types or tissues"/>
</dbReference>
<dbReference type="GO" id="GO:0005737">
    <property type="term" value="C:cytoplasm"/>
    <property type="evidence" value="ECO:0000318"/>
    <property type="project" value="GO_Central"/>
</dbReference>
<dbReference type="GO" id="GO:0005634">
    <property type="term" value="C:nucleus"/>
    <property type="evidence" value="ECO:0000318"/>
    <property type="project" value="GO_Central"/>
</dbReference>
<dbReference type="GO" id="GO:0000151">
    <property type="term" value="C:ubiquitin ligase complex"/>
    <property type="evidence" value="ECO:0007669"/>
    <property type="project" value="InterPro"/>
</dbReference>
<dbReference type="GO" id="GO:0034450">
    <property type="term" value="F:ubiquitin-ubiquitin ligase activity"/>
    <property type="evidence" value="ECO:0000318"/>
    <property type="project" value="GO_Central"/>
</dbReference>
<dbReference type="GO" id="GO:0036503">
    <property type="term" value="P:ERAD pathway"/>
    <property type="evidence" value="ECO:0000318"/>
    <property type="project" value="GO_Central"/>
</dbReference>
<dbReference type="GO" id="GO:0000209">
    <property type="term" value="P:protein polyubiquitination"/>
    <property type="evidence" value="ECO:0000318"/>
    <property type="project" value="GO_Central"/>
</dbReference>
<dbReference type="GO" id="GO:0006511">
    <property type="term" value="P:ubiquitin-dependent protein catabolic process"/>
    <property type="evidence" value="ECO:0007669"/>
    <property type="project" value="InterPro"/>
</dbReference>
<dbReference type="CDD" id="cd16657">
    <property type="entry name" value="RING-Ubox_UBE4A"/>
    <property type="match status" value="1"/>
</dbReference>
<dbReference type="FunFam" id="3.30.40.10:FF:000055">
    <property type="entry name" value="Ubiquitin conjugation factor e4 a"/>
    <property type="match status" value="1"/>
</dbReference>
<dbReference type="Gene3D" id="3.30.40.10">
    <property type="entry name" value="Zinc/RING finger domain, C3HC4 (zinc finger)"/>
    <property type="match status" value="1"/>
</dbReference>
<dbReference type="InterPro" id="IPR019474">
    <property type="entry name" value="Ub_conjug_fac_E4_core"/>
</dbReference>
<dbReference type="InterPro" id="IPR045132">
    <property type="entry name" value="UBE4"/>
</dbReference>
<dbReference type="InterPro" id="IPR003613">
    <property type="entry name" value="Ubox_domain"/>
</dbReference>
<dbReference type="InterPro" id="IPR013083">
    <property type="entry name" value="Znf_RING/FYVE/PHD"/>
</dbReference>
<dbReference type="PANTHER" id="PTHR13931:SF16">
    <property type="entry name" value="UBIQUITIN CONJUGATION FACTOR E4 A"/>
    <property type="match status" value="1"/>
</dbReference>
<dbReference type="PANTHER" id="PTHR13931">
    <property type="entry name" value="UBIQUITINATION FACTOR E4"/>
    <property type="match status" value="1"/>
</dbReference>
<dbReference type="Pfam" id="PF04564">
    <property type="entry name" value="U-box"/>
    <property type="match status" value="1"/>
</dbReference>
<dbReference type="Pfam" id="PF10408">
    <property type="entry name" value="Ufd2P_core"/>
    <property type="match status" value="1"/>
</dbReference>
<dbReference type="SMART" id="SM00504">
    <property type="entry name" value="Ubox"/>
    <property type="match status" value="1"/>
</dbReference>
<dbReference type="SUPFAM" id="SSF57850">
    <property type="entry name" value="RING/U-box"/>
    <property type="match status" value="1"/>
</dbReference>
<dbReference type="PROSITE" id="PS51698">
    <property type="entry name" value="U_BOX"/>
    <property type="match status" value="1"/>
</dbReference>
<reference key="1">
    <citation type="submission" date="2007-06" db="EMBL/GenBank/DDBJ databases">
        <authorList>
            <consortium name="NIH - Mammalian Gene Collection (MGC) project"/>
        </authorList>
    </citation>
    <scope>NUCLEOTIDE SEQUENCE [LARGE SCALE MRNA]</scope>
    <source>
        <strain>Hereford</strain>
        <tissue>Fetal muscle</tissue>
    </source>
</reference>
<evidence type="ECO:0000250" key="1">
    <source>
        <dbReference type="UniProtKB" id="E9Q735"/>
    </source>
</evidence>
<evidence type="ECO:0000250" key="2">
    <source>
        <dbReference type="UniProtKB" id="P54860"/>
    </source>
</evidence>
<evidence type="ECO:0000250" key="3">
    <source>
        <dbReference type="UniProtKB" id="Q14139"/>
    </source>
</evidence>
<evidence type="ECO:0000250" key="4">
    <source>
        <dbReference type="UniProtKB" id="Q9ES00"/>
    </source>
</evidence>
<evidence type="ECO:0000256" key="5">
    <source>
        <dbReference type="SAM" id="MobiDB-lite"/>
    </source>
</evidence>
<evidence type="ECO:0000305" key="6"/>
<gene>
    <name evidence="6" type="primary">UBE4A</name>
</gene>
<feature type="chain" id="PRO_0000324758" description="Ubiquitin conjugation factor E4 A">
    <location>
        <begin position="1"/>
        <end position="1067"/>
    </location>
</feature>
<feature type="domain" description="U-box">
    <location>
        <begin position="987"/>
        <end position="1061"/>
    </location>
</feature>
<feature type="region of interest" description="Disordered" evidence="5">
    <location>
        <begin position="33"/>
        <end position="57"/>
    </location>
</feature>
<feature type="modified residue" description="N6-acetyllysine" evidence="3">
    <location>
        <position position="386"/>
    </location>
</feature>
<name>UBE4A_BOVIN</name>
<proteinExistence type="evidence at transcript level"/>
<comment type="function">
    <text evidence="1 2">Ubiquitin-protein ligase that probably functions as an E3 ligase in conjunction with specific E1 and E2 ligases. May also function as an E4 ligase mediating the assembly of polyubiquitin chains on substrates ubiquitinated by another E3 ubiquitin ligase. Mediates 'Lys-48'-linked polyubiquitination of substrates.</text>
</comment>
<comment type="catalytic activity">
    <reaction evidence="1">
        <text>S-ubiquitinyl-[E2 ubiquitin-conjugating enzyme]-L-cysteine + [acceptor protein]-L-lysine = [E2 ubiquitin-conjugating enzyme]-L-cysteine + N(6)-ubiquitinyl-[acceptor protein]-L-lysine.</text>
        <dbReference type="EC" id="2.3.2.27"/>
    </reaction>
</comment>
<comment type="pathway">
    <text evidence="1">Protein modification; protein ubiquitination.</text>
</comment>
<comment type="subcellular location">
    <subcellularLocation>
        <location evidence="1">Cytoplasm</location>
    </subcellularLocation>
</comment>
<comment type="domain">
    <text evidence="2 4">The U-box domain is required for the ubiquitin protein ligase activity.</text>
</comment>
<comment type="similarity">
    <text evidence="6">Belongs to the ubiquitin conjugation factor E4 family.</text>
</comment>
<accession>A5PKG6</accession>
<organism>
    <name type="scientific">Bos taurus</name>
    <name type="common">Bovine</name>
    <dbReference type="NCBI Taxonomy" id="9913"/>
    <lineage>
        <taxon>Eukaryota</taxon>
        <taxon>Metazoa</taxon>
        <taxon>Chordata</taxon>
        <taxon>Craniata</taxon>
        <taxon>Vertebrata</taxon>
        <taxon>Euteleostomi</taxon>
        <taxon>Mammalia</taxon>
        <taxon>Eutheria</taxon>
        <taxon>Laurasiatheria</taxon>
        <taxon>Artiodactyla</taxon>
        <taxon>Ruminantia</taxon>
        <taxon>Pecora</taxon>
        <taxon>Bovidae</taxon>
        <taxon>Bovinae</taxon>
        <taxon>Bos</taxon>
    </lineage>
</organism>